<organism>
    <name type="scientific">Streptococcus pyogenes serotype M18 (strain MGAS8232)</name>
    <dbReference type="NCBI Taxonomy" id="186103"/>
    <lineage>
        <taxon>Bacteria</taxon>
        <taxon>Bacillati</taxon>
        <taxon>Bacillota</taxon>
        <taxon>Bacilli</taxon>
        <taxon>Lactobacillales</taxon>
        <taxon>Streptococcaceae</taxon>
        <taxon>Streptococcus</taxon>
    </lineage>
</organism>
<dbReference type="EMBL" id="AE009949">
    <property type="protein sequence ID" value="AAL96880.1"/>
    <property type="molecule type" value="Genomic_DNA"/>
</dbReference>
<dbReference type="RefSeq" id="WP_000533765.1">
    <property type="nucleotide sequence ID" value="NC_003485.1"/>
</dbReference>
<dbReference type="SMR" id="P66498"/>
<dbReference type="GeneID" id="98392396"/>
<dbReference type="KEGG" id="spm:spyM18_0054"/>
<dbReference type="HOGENOM" id="CLU_144911_0_1_9"/>
<dbReference type="GO" id="GO:0005737">
    <property type="term" value="C:cytoplasm"/>
    <property type="evidence" value="ECO:0007669"/>
    <property type="project" value="UniProtKB-ARBA"/>
</dbReference>
<dbReference type="GO" id="GO:0015935">
    <property type="term" value="C:small ribosomal subunit"/>
    <property type="evidence" value="ECO:0007669"/>
    <property type="project" value="InterPro"/>
</dbReference>
<dbReference type="GO" id="GO:0019843">
    <property type="term" value="F:rRNA binding"/>
    <property type="evidence" value="ECO:0007669"/>
    <property type="project" value="UniProtKB-UniRule"/>
</dbReference>
<dbReference type="GO" id="GO:0003735">
    <property type="term" value="F:structural constituent of ribosome"/>
    <property type="evidence" value="ECO:0007669"/>
    <property type="project" value="InterPro"/>
</dbReference>
<dbReference type="GO" id="GO:0000028">
    <property type="term" value="P:ribosomal small subunit assembly"/>
    <property type="evidence" value="ECO:0007669"/>
    <property type="project" value="TreeGrafter"/>
</dbReference>
<dbReference type="GO" id="GO:0006412">
    <property type="term" value="P:translation"/>
    <property type="evidence" value="ECO:0007669"/>
    <property type="project" value="UniProtKB-UniRule"/>
</dbReference>
<dbReference type="FunFam" id="3.30.860.10:FF:000001">
    <property type="entry name" value="30S ribosomal protein S19"/>
    <property type="match status" value="1"/>
</dbReference>
<dbReference type="Gene3D" id="3.30.860.10">
    <property type="entry name" value="30s Ribosomal Protein S19, Chain A"/>
    <property type="match status" value="1"/>
</dbReference>
<dbReference type="HAMAP" id="MF_00531">
    <property type="entry name" value="Ribosomal_uS19"/>
    <property type="match status" value="1"/>
</dbReference>
<dbReference type="InterPro" id="IPR002222">
    <property type="entry name" value="Ribosomal_uS19"/>
</dbReference>
<dbReference type="InterPro" id="IPR005732">
    <property type="entry name" value="Ribosomal_uS19_bac-type"/>
</dbReference>
<dbReference type="InterPro" id="IPR020934">
    <property type="entry name" value="Ribosomal_uS19_CS"/>
</dbReference>
<dbReference type="InterPro" id="IPR023575">
    <property type="entry name" value="Ribosomal_uS19_SF"/>
</dbReference>
<dbReference type="NCBIfam" id="TIGR01050">
    <property type="entry name" value="rpsS_bact"/>
    <property type="match status" value="1"/>
</dbReference>
<dbReference type="PANTHER" id="PTHR11880">
    <property type="entry name" value="RIBOSOMAL PROTEIN S19P FAMILY MEMBER"/>
    <property type="match status" value="1"/>
</dbReference>
<dbReference type="PANTHER" id="PTHR11880:SF8">
    <property type="entry name" value="SMALL RIBOSOMAL SUBUNIT PROTEIN US19M"/>
    <property type="match status" value="1"/>
</dbReference>
<dbReference type="Pfam" id="PF00203">
    <property type="entry name" value="Ribosomal_S19"/>
    <property type="match status" value="1"/>
</dbReference>
<dbReference type="PIRSF" id="PIRSF002144">
    <property type="entry name" value="Ribosomal_S19"/>
    <property type="match status" value="1"/>
</dbReference>
<dbReference type="PRINTS" id="PR00975">
    <property type="entry name" value="RIBOSOMALS19"/>
</dbReference>
<dbReference type="SUPFAM" id="SSF54570">
    <property type="entry name" value="Ribosomal protein S19"/>
    <property type="match status" value="1"/>
</dbReference>
<dbReference type="PROSITE" id="PS00323">
    <property type="entry name" value="RIBOSOMAL_S19"/>
    <property type="match status" value="1"/>
</dbReference>
<gene>
    <name evidence="1" type="primary">rpsS</name>
    <name type="ordered locus">spyM18_0054</name>
</gene>
<reference key="1">
    <citation type="journal article" date="2002" name="Proc. Natl. Acad. Sci. U.S.A.">
        <title>Genome sequence and comparative microarray analysis of serotype M18 group A Streptococcus strains associated with acute rheumatic fever outbreaks.</title>
        <authorList>
            <person name="Smoot J.C."/>
            <person name="Barbian K.D."/>
            <person name="Van Gompel J.J."/>
            <person name="Smoot L.M."/>
            <person name="Chaussee M.S."/>
            <person name="Sylva G.L."/>
            <person name="Sturdevant D.E."/>
            <person name="Ricklefs S.M."/>
            <person name="Porcella S.F."/>
            <person name="Parkins L.D."/>
            <person name="Beres S.B."/>
            <person name="Campbell D.S."/>
            <person name="Smith T.M."/>
            <person name="Zhang Q."/>
            <person name="Kapur V."/>
            <person name="Daly J.A."/>
            <person name="Veasy L.G."/>
            <person name="Musser J.M."/>
        </authorList>
    </citation>
    <scope>NUCLEOTIDE SEQUENCE [LARGE SCALE GENOMIC DNA]</scope>
    <source>
        <strain>MGAS8232</strain>
    </source>
</reference>
<keyword id="KW-0687">Ribonucleoprotein</keyword>
<keyword id="KW-0689">Ribosomal protein</keyword>
<keyword id="KW-0694">RNA-binding</keyword>
<keyword id="KW-0699">rRNA-binding</keyword>
<protein>
    <recommendedName>
        <fullName evidence="1">Small ribosomal subunit protein uS19</fullName>
    </recommendedName>
    <alternativeName>
        <fullName evidence="2">30S ribosomal protein S19</fullName>
    </alternativeName>
</protein>
<comment type="function">
    <text evidence="1">Protein S19 forms a complex with S13 that binds strongly to the 16S ribosomal RNA.</text>
</comment>
<comment type="similarity">
    <text evidence="1">Belongs to the universal ribosomal protein uS19 family.</text>
</comment>
<name>RS19_STRP8</name>
<feature type="chain" id="PRO_0000129917" description="Small ribosomal subunit protein uS19">
    <location>
        <begin position="1"/>
        <end position="92"/>
    </location>
</feature>
<sequence>MGRSLKKGPFVDEHLMKKVEAQANDEKKKVIKTWSRRSTIFPSFIGYTIAVYDGRKHVPVYIQEDMVGHKLGEFAPTRTYKGHAADDKKTRR</sequence>
<proteinExistence type="inferred from homology"/>
<accession>P66498</accession>
<accession>Q9A1X0</accession>
<evidence type="ECO:0000255" key="1">
    <source>
        <dbReference type="HAMAP-Rule" id="MF_00531"/>
    </source>
</evidence>
<evidence type="ECO:0000305" key="2"/>